<dbReference type="EMBL" id="D32216">
    <property type="protein sequence ID" value="BAA06928.1"/>
    <property type="molecule type" value="Genomic_DNA"/>
</dbReference>
<dbReference type="EMBL" id="D84432">
    <property type="protein sequence ID" value="BAA12389.1"/>
    <property type="molecule type" value="Genomic_DNA"/>
</dbReference>
<dbReference type="EMBL" id="AL009126">
    <property type="protein sequence ID" value="CAB14566.1"/>
    <property type="molecule type" value="Genomic_DNA"/>
</dbReference>
<dbReference type="PIR" id="E69945">
    <property type="entry name" value="E69945"/>
</dbReference>
<dbReference type="RefSeq" id="NP_390502.1">
    <property type="nucleotide sequence ID" value="NC_000964.3"/>
</dbReference>
<dbReference type="RefSeq" id="WP_009967809.1">
    <property type="nucleotide sequence ID" value="NZ_OZ025638.1"/>
</dbReference>
<dbReference type="SMR" id="P45911"/>
<dbReference type="FunCoup" id="P45911">
    <property type="interactions" value="40"/>
</dbReference>
<dbReference type="STRING" id="224308.BSU26250"/>
<dbReference type="PaxDb" id="224308-BSU26250"/>
<dbReference type="EnsemblBacteria" id="CAB14566">
    <property type="protein sequence ID" value="CAB14566"/>
    <property type="gene ID" value="BSU_26250"/>
</dbReference>
<dbReference type="GeneID" id="937694"/>
<dbReference type="KEGG" id="bsu:BSU26250"/>
<dbReference type="PATRIC" id="fig|224308.179.peg.2851"/>
<dbReference type="eggNOG" id="COG4570">
    <property type="taxonomic scope" value="Bacteria"/>
</dbReference>
<dbReference type="InParanoid" id="P45911"/>
<dbReference type="OrthoDB" id="5114842at2"/>
<dbReference type="PhylomeDB" id="P45911"/>
<dbReference type="BioCyc" id="BSUB:BSU26250-MONOMER"/>
<dbReference type="Proteomes" id="UP000001570">
    <property type="component" value="Chromosome"/>
</dbReference>
<dbReference type="GO" id="GO:0000287">
    <property type="term" value="F:magnesium ion binding"/>
    <property type="evidence" value="ECO:0007669"/>
    <property type="project" value="InterPro"/>
</dbReference>
<dbReference type="GO" id="GO:0006310">
    <property type="term" value="P:DNA recombination"/>
    <property type="evidence" value="ECO:0007669"/>
    <property type="project" value="InterPro"/>
</dbReference>
<dbReference type="GO" id="GO:0006281">
    <property type="term" value="P:DNA repair"/>
    <property type="evidence" value="ECO:0007669"/>
    <property type="project" value="InterPro"/>
</dbReference>
<dbReference type="Gene3D" id="3.30.1330.70">
    <property type="entry name" value="Holliday junction resolvase RusA"/>
    <property type="match status" value="1"/>
</dbReference>
<dbReference type="InterPro" id="IPR008822">
    <property type="entry name" value="Endonuclease_RusA-like"/>
</dbReference>
<dbReference type="InterPro" id="IPR036614">
    <property type="entry name" value="RusA-like_sf"/>
</dbReference>
<dbReference type="Pfam" id="PF05866">
    <property type="entry name" value="RusA"/>
    <property type="match status" value="1"/>
</dbReference>
<dbReference type="SUPFAM" id="SSF103084">
    <property type="entry name" value="Holliday junction resolvase RusA"/>
    <property type="match status" value="1"/>
</dbReference>
<proteinExistence type="predicted"/>
<organism>
    <name type="scientific">Bacillus subtilis (strain 168)</name>
    <dbReference type="NCBI Taxonomy" id="224308"/>
    <lineage>
        <taxon>Bacteria</taxon>
        <taxon>Bacillati</taxon>
        <taxon>Bacillota</taxon>
        <taxon>Bacilli</taxon>
        <taxon>Bacillales</taxon>
        <taxon>Bacillaceae</taxon>
        <taxon>Bacillus</taxon>
    </lineage>
</organism>
<feature type="chain" id="PRO_0000049745" description="Uncharacterized protein YqaN">
    <location>
        <begin position="1"/>
        <end position="142"/>
    </location>
</feature>
<feature type="region of interest" description="Disordered" evidence="1">
    <location>
        <begin position="70"/>
        <end position="94"/>
    </location>
</feature>
<feature type="compositionally biased region" description="Basic and acidic residues" evidence="1">
    <location>
        <begin position="81"/>
        <end position="94"/>
    </location>
</feature>
<gene>
    <name type="primary">yqaN</name>
    <name type="ordered locus">BSU26250</name>
</gene>
<keyword id="KW-1185">Reference proteome</keyword>
<sequence>MDCIKFTVYGEPVAQGRPRGSIRNGKVHMRDPAKSKYFKQYVALVASQHRPETIITGPVSMDVKVYRPMPKSVSNSKKKKEKAEKGLLRPTTKPDVDNYVKGVKDALNHLIYKDDSQVVDLKVSKFYSEEPRVEVMIREVSA</sequence>
<evidence type="ECO:0000256" key="1">
    <source>
        <dbReference type="SAM" id="MobiDB-lite"/>
    </source>
</evidence>
<reference key="1">
    <citation type="journal article" date="1995" name="Microbiology">
        <title>Complete nucleotide sequence of a skin element excised by DNA rearrangement during sporulation in Bacillus subtilis.</title>
        <authorList>
            <person name="Takemaru K."/>
            <person name="Mizuno M."/>
            <person name="Sato T."/>
            <person name="Takeuchi M."/>
            <person name="Kobayashi Y."/>
        </authorList>
    </citation>
    <scope>NUCLEOTIDE SEQUENCE [GENOMIC DNA]</scope>
    <source>
        <strain>168 / JH642</strain>
    </source>
</reference>
<reference key="2">
    <citation type="journal article" date="1996" name="Microbiology">
        <title>Systematic sequencing of the 283 kb 210 degrees-232 degrees region of the Bacillus subtilis genome containing the skin element and many sporulation genes.</title>
        <authorList>
            <person name="Mizuno M."/>
            <person name="Masuda S."/>
            <person name="Takemaru K."/>
            <person name="Hosono S."/>
            <person name="Sato T."/>
            <person name="Takeuchi M."/>
            <person name="Kobayashi Y."/>
        </authorList>
    </citation>
    <scope>NUCLEOTIDE SEQUENCE [GENOMIC DNA]</scope>
    <source>
        <strain>168 / JH642</strain>
    </source>
</reference>
<reference key="3">
    <citation type="journal article" date="1997" name="Nature">
        <title>The complete genome sequence of the Gram-positive bacterium Bacillus subtilis.</title>
        <authorList>
            <person name="Kunst F."/>
            <person name="Ogasawara N."/>
            <person name="Moszer I."/>
            <person name="Albertini A.M."/>
            <person name="Alloni G."/>
            <person name="Azevedo V."/>
            <person name="Bertero M.G."/>
            <person name="Bessieres P."/>
            <person name="Bolotin A."/>
            <person name="Borchert S."/>
            <person name="Borriss R."/>
            <person name="Boursier L."/>
            <person name="Brans A."/>
            <person name="Braun M."/>
            <person name="Brignell S.C."/>
            <person name="Bron S."/>
            <person name="Brouillet S."/>
            <person name="Bruschi C.V."/>
            <person name="Caldwell B."/>
            <person name="Capuano V."/>
            <person name="Carter N.M."/>
            <person name="Choi S.-K."/>
            <person name="Codani J.-J."/>
            <person name="Connerton I.F."/>
            <person name="Cummings N.J."/>
            <person name="Daniel R.A."/>
            <person name="Denizot F."/>
            <person name="Devine K.M."/>
            <person name="Duesterhoeft A."/>
            <person name="Ehrlich S.D."/>
            <person name="Emmerson P.T."/>
            <person name="Entian K.-D."/>
            <person name="Errington J."/>
            <person name="Fabret C."/>
            <person name="Ferrari E."/>
            <person name="Foulger D."/>
            <person name="Fritz C."/>
            <person name="Fujita M."/>
            <person name="Fujita Y."/>
            <person name="Fuma S."/>
            <person name="Galizzi A."/>
            <person name="Galleron N."/>
            <person name="Ghim S.-Y."/>
            <person name="Glaser P."/>
            <person name="Goffeau A."/>
            <person name="Golightly E.J."/>
            <person name="Grandi G."/>
            <person name="Guiseppi G."/>
            <person name="Guy B.J."/>
            <person name="Haga K."/>
            <person name="Haiech J."/>
            <person name="Harwood C.R."/>
            <person name="Henaut A."/>
            <person name="Hilbert H."/>
            <person name="Holsappel S."/>
            <person name="Hosono S."/>
            <person name="Hullo M.-F."/>
            <person name="Itaya M."/>
            <person name="Jones L.-M."/>
            <person name="Joris B."/>
            <person name="Karamata D."/>
            <person name="Kasahara Y."/>
            <person name="Klaerr-Blanchard M."/>
            <person name="Klein C."/>
            <person name="Kobayashi Y."/>
            <person name="Koetter P."/>
            <person name="Koningstein G."/>
            <person name="Krogh S."/>
            <person name="Kumano M."/>
            <person name="Kurita K."/>
            <person name="Lapidus A."/>
            <person name="Lardinois S."/>
            <person name="Lauber J."/>
            <person name="Lazarevic V."/>
            <person name="Lee S.-M."/>
            <person name="Levine A."/>
            <person name="Liu H."/>
            <person name="Masuda S."/>
            <person name="Mauel C."/>
            <person name="Medigue C."/>
            <person name="Medina N."/>
            <person name="Mellado R.P."/>
            <person name="Mizuno M."/>
            <person name="Moestl D."/>
            <person name="Nakai S."/>
            <person name="Noback M."/>
            <person name="Noone D."/>
            <person name="O'Reilly M."/>
            <person name="Ogawa K."/>
            <person name="Ogiwara A."/>
            <person name="Oudega B."/>
            <person name="Park S.-H."/>
            <person name="Parro V."/>
            <person name="Pohl T.M."/>
            <person name="Portetelle D."/>
            <person name="Porwollik S."/>
            <person name="Prescott A.M."/>
            <person name="Presecan E."/>
            <person name="Pujic P."/>
            <person name="Purnelle B."/>
            <person name="Rapoport G."/>
            <person name="Rey M."/>
            <person name="Reynolds S."/>
            <person name="Rieger M."/>
            <person name="Rivolta C."/>
            <person name="Rocha E."/>
            <person name="Roche B."/>
            <person name="Rose M."/>
            <person name="Sadaie Y."/>
            <person name="Sato T."/>
            <person name="Scanlan E."/>
            <person name="Schleich S."/>
            <person name="Schroeter R."/>
            <person name="Scoffone F."/>
            <person name="Sekiguchi J."/>
            <person name="Sekowska A."/>
            <person name="Seror S.J."/>
            <person name="Serror P."/>
            <person name="Shin B.-S."/>
            <person name="Soldo B."/>
            <person name="Sorokin A."/>
            <person name="Tacconi E."/>
            <person name="Takagi T."/>
            <person name="Takahashi H."/>
            <person name="Takemaru K."/>
            <person name="Takeuchi M."/>
            <person name="Tamakoshi A."/>
            <person name="Tanaka T."/>
            <person name="Terpstra P."/>
            <person name="Tognoni A."/>
            <person name="Tosato V."/>
            <person name="Uchiyama S."/>
            <person name="Vandenbol M."/>
            <person name="Vannier F."/>
            <person name="Vassarotti A."/>
            <person name="Viari A."/>
            <person name="Wambutt R."/>
            <person name="Wedler E."/>
            <person name="Wedler H."/>
            <person name="Weitzenegger T."/>
            <person name="Winters P."/>
            <person name="Wipat A."/>
            <person name="Yamamoto H."/>
            <person name="Yamane K."/>
            <person name="Yasumoto K."/>
            <person name="Yata K."/>
            <person name="Yoshida K."/>
            <person name="Yoshikawa H.-F."/>
            <person name="Zumstein E."/>
            <person name="Yoshikawa H."/>
            <person name="Danchin A."/>
        </authorList>
    </citation>
    <scope>NUCLEOTIDE SEQUENCE [LARGE SCALE GENOMIC DNA]</scope>
    <source>
        <strain>168</strain>
    </source>
</reference>
<reference key="4">
    <citation type="journal article" date="1995" name="Gene">
        <title>Analysis of a Bacillus subtilis genome fragment using a co-operative computer system prototype.</title>
        <authorList>
            <person name="Medigue C."/>
            <person name="Moszer I."/>
            <person name="Viari A."/>
            <person name="Danchin A."/>
        </authorList>
    </citation>
    <scope>IDENTIFICATION</scope>
</reference>
<accession>P45911</accession>
<protein>
    <recommendedName>
        <fullName>Uncharacterized protein YqaN</fullName>
    </recommendedName>
</protein>
<name>YQAN_BACSU</name>